<protein>
    <recommendedName>
        <fullName evidence="4">UDP-glucosyl transferase 79T1</fullName>
        <shortName evidence="4">SoUGT79T1</shortName>
        <ecNumber evidence="3">2.4.1.-</ecNumber>
    </recommendedName>
</protein>
<name>GT791_SAPOF</name>
<reference evidence="7" key="1">
    <citation type="journal article" date="2025" name="Nat. Chem. Biol.">
        <title>Unlocking saponin biosynthesis in soapwort.</title>
        <authorList>
            <person name="Jo S."/>
            <person name="El-Demerdash A."/>
            <person name="Owen C."/>
            <person name="Srivastava V."/>
            <person name="Wu D."/>
            <person name="Kikuchi S."/>
            <person name="Reed J."/>
            <person name="Hodgson H."/>
            <person name="Harkess A."/>
            <person name="Shu S."/>
            <person name="Plott C."/>
            <person name="Jenkins J."/>
            <person name="Williams M."/>
            <person name="Boston L.-B."/>
            <person name="Lacchini E."/>
            <person name="Qu T."/>
            <person name="Goossens A."/>
            <person name="Grimwood J."/>
            <person name="Schmutz J."/>
            <person name="Leebens-Mack J."/>
            <person name="Osbourn A."/>
        </authorList>
    </citation>
    <scope>NUCLEOTIDE SEQUENCE [MRNA]</scope>
    <scope>FUNCTION</scope>
    <scope>CATALYTIC ACTIVITY</scope>
    <scope>TISSUE SPECIFICITY</scope>
    <scope>PATHWAY</scope>
    <scope>BIOTECHNOLOGY</scope>
</reference>
<reference evidence="6" key="2">
    <citation type="submission" date="2024-03" db="EMBL/GenBank/DDBJ databases">
        <title>WGS assembly of Saponaria officinalis var. Norfolk2.</title>
        <authorList>
            <person name="Jenkins J."/>
            <person name="Shu S."/>
            <person name="Grimwood J."/>
            <person name="Barry K."/>
            <person name="Goodstein D."/>
            <person name="Schmutz J."/>
            <person name="Leebens-Mack J."/>
            <person name="Osbourn A."/>
        </authorList>
    </citation>
    <scope>NUCLEOTIDE SEQUENCE [LARGE SCALE GENOMIC DNA]</scope>
    <source>
        <strain>cv. Norfolk2</strain>
        <tissue>Leaf</tissue>
    </source>
</reference>
<gene>
    <name evidence="4" type="primary">UGT79T1</name>
    <name evidence="4" type="synonym">Saoffv11049136m</name>
    <name evidence="6" type="ORF">RND81_09G214900</name>
</gene>
<evidence type="ECO:0000250" key="1">
    <source>
        <dbReference type="UniProtKB" id="A0A0A1HA03"/>
    </source>
</evidence>
<evidence type="ECO:0000250" key="2">
    <source>
        <dbReference type="UniProtKB" id="Q9M156"/>
    </source>
</evidence>
<evidence type="ECO:0000269" key="3">
    <source>
    </source>
</evidence>
<evidence type="ECO:0000303" key="4">
    <source>
    </source>
</evidence>
<evidence type="ECO:0000305" key="5"/>
<evidence type="ECO:0000312" key="6">
    <source>
        <dbReference type="EMBL" id="KAK9691727.1"/>
    </source>
</evidence>
<evidence type="ECO:0000312" key="7">
    <source>
        <dbReference type="EMBL" id="WWM48161.1"/>
    </source>
</evidence>
<feature type="chain" id="PRO_0000462361" description="UDP-glucosyl transferase 79T1">
    <location>
        <begin position="1"/>
        <end position="447"/>
    </location>
</feature>
<feature type="active site" description="Proton acceptor" evidence="1">
    <location>
        <position position="18"/>
    </location>
</feature>
<feature type="active site" description="Charge relay" evidence="1">
    <location>
        <position position="116"/>
    </location>
</feature>
<feature type="binding site" evidence="2">
    <location>
        <position position="265"/>
    </location>
    <ligand>
        <name>UDP</name>
        <dbReference type="ChEBI" id="CHEBI:58223"/>
    </ligand>
</feature>
<feature type="binding site" evidence="2">
    <location>
        <position position="323"/>
    </location>
    <ligand>
        <name>UDP</name>
        <dbReference type="ChEBI" id="CHEBI:58223"/>
    </ligand>
</feature>
<feature type="binding site" evidence="2">
    <location>
        <position position="324"/>
    </location>
    <ligand>
        <name>UDP</name>
        <dbReference type="ChEBI" id="CHEBI:58223"/>
    </ligand>
</feature>
<feature type="binding site" evidence="2">
    <location>
        <position position="341"/>
    </location>
    <ligand>
        <name>UDP</name>
        <dbReference type="ChEBI" id="CHEBI:58223"/>
    </ligand>
</feature>
<feature type="binding site" evidence="2">
    <location>
        <position position="346"/>
    </location>
    <ligand>
        <name>UDP</name>
        <dbReference type="ChEBI" id="CHEBI:58223"/>
    </ligand>
</feature>
<feature type="binding site" evidence="2">
    <location>
        <position position="349"/>
    </location>
    <ligand>
        <name>UDP</name>
        <dbReference type="ChEBI" id="CHEBI:58223"/>
    </ligand>
</feature>
<dbReference type="EC" id="2.4.1.-" evidence="3"/>
<dbReference type="EMBL" id="OR426408">
    <property type="protein sequence ID" value="WWM48161.1"/>
    <property type="molecule type" value="mRNA"/>
</dbReference>
<dbReference type="EMBL" id="JBDFQZ010000009">
    <property type="protein sequence ID" value="KAK9691727.1"/>
    <property type="molecule type" value="Genomic_DNA"/>
</dbReference>
<dbReference type="UniPathway" id="UPA00213"/>
<dbReference type="Proteomes" id="UP001443914">
    <property type="component" value="Unassembled WGS sequence"/>
</dbReference>
<dbReference type="GO" id="GO:0035251">
    <property type="term" value="F:UDP-glucosyltransferase activity"/>
    <property type="evidence" value="ECO:0007669"/>
    <property type="project" value="InterPro"/>
</dbReference>
<dbReference type="GO" id="GO:0008194">
    <property type="term" value="F:UDP-glycosyltransferase activity"/>
    <property type="evidence" value="ECO:0000314"/>
    <property type="project" value="UniProtKB"/>
</dbReference>
<dbReference type="GO" id="GO:0070085">
    <property type="term" value="P:glycosylation"/>
    <property type="evidence" value="ECO:0000314"/>
    <property type="project" value="UniProtKB"/>
</dbReference>
<dbReference type="GO" id="GO:0016135">
    <property type="term" value="P:saponin biosynthetic process"/>
    <property type="evidence" value="ECO:0000314"/>
    <property type="project" value="UniProtKB"/>
</dbReference>
<dbReference type="GO" id="GO:0016104">
    <property type="term" value="P:triterpenoid biosynthetic process"/>
    <property type="evidence" value="ECO:0000314"/>
    <property type="project" value="UniProtKB"/>
</dbReference>
<dbReference type="CDD" id="cd03784">
    <property type="entry name" value="GT1_Gtf-like"/>
    <property type="match status" value="1"/>
</dbReference>
<dbReference type="FunFam" id="3.40.50.2000:FF:000037">
    <property type="entry name" value="Glycosyltransferase"/>
    <property type="match status" value="1"/>
</dbReference>
<dbReference type="Gene3D" id="3.40.50.2000">
    <property type="entry name" value="Glycogen Phosphorylase B"/>
    <property type="match status" value="2"/>
</dbReference>
<dbReference type="InterPro" id="IPR050481">
    <property type="entry name" value="UDP-glycosyltransf_plant"/>
</dbReference>
<dbReference type="InterPro" id="IPR002213">
    <property type="entry name" value="UDP_glucos_trans"/>
</dbReference>
<dbReference type="PANTHER" id="PTHR48049">
    <property type="entry name" value="GLYCOSYLTRANSFERASE"/>
    <property type="match status" value="1"/>
</dbReference>
<dbReference type="PANTHER" id="PTHR48049:SF91">
    <property type="entry name" value="UDP-GLYCOSYLTRANSFERASE 79B7-RELATED"/>
    <property type="match status" value="1"/>
</dbReference>
<dbReference type="Pfam" id="PF00201">
    <property type="entry name" value="UDPGT"/>
    <property type="match status" value="1"/>
</dbReference>
<dbReference type="SUPFAM" id="SSF53756">
    <property type="entry name" value="UDP-Glycosyltransferase/glycogen phosphorylase"/>
    <property type="match status" value="1"/>
</dbReference>
<sequence length="447" mass="50210">MSAKMLHVVMYPWFAYGHMIPFLHLSNKLAETGHKVTYILPPKALTRLQNLNLNPTQITFRTITVPRVDGLPAGAENVTDIPDITLHTHLATALDRTRPEFETIVELIKPDVIMYDVAYWVPEVAVKYGAKSVAYSVVSAASVSLSKTVVDRMTPLEKPMTEEERKKKFAQYPHLIQLYGPFGEGITMYDRLTGMLSKCDAIACRTCREIEGKYCQYLSTQYEKKVTLTGPVLPEPEVGATLEAPWSEWLSRFKLGSVLFCAFGSQFYLDKDQFQEIILGLEMTNLPFLMAVQPPKGCATIEEAYPEGFAERVKDRGVVTSQWVQQLVILAHPAVGCFVNHCAFGTMWEALLSEKQLVMIPQLGDQILNTKMLADELKVGVEVERGIGGWVSKENLCKAIKSVMDEDSEIGKDVKQSHEKWRATLSSKDLMSTYIDSFIKDLQALVE</sequence>
<keyword id="KW-0808">Transferase</keyword>
<proteinExistence type="evidence at protein level"/>
<organism>
    <name type="scientific">Saponaria officinalis</name>
    <name type="common">Common soapwort</name>
    <name type="synonym">Lychnis saponaria</name>
    <dbReference type="NCBI Taxonomy" id="3572"/>
    <lineage>
        <taxon>Eukaryota</taxon>
        <taxon>Viridiplantae</taxon>
        <taxon>Streptophyta</taxon>
        <taxon>Embryophyta</taxon>
        <taxon>Tracheophyta</taxon>
        <taxon>Spermatophyta</taxon>
        <taxon>Magnoliopsida</taxon>
        <taxon>eudicotyledons</taxon>
        <taxon>Gunneridae</taxon>
        <taxon>Pentapetalae</taxon>
        <taxon>Caryophyllales</taxon>
        <taxon>Caryophyllaceae</taxon>
        <taxon>Caryophylleae</taxon>
        <taxon>Saponaria</taxon>
    </lineage>
</organism>
<accession>A0AAW1IQ05</accession>
<comment type="function">
    <text evidence="3">Component of the oleanane-type triterpene saponins (e.g. saponarioside A and saponarioside B) biosynthetic pathway, leading to the production of natural products with detergent properties used as traditional sources of soap (PubMed:39043959). A glycosyltransferase that mediates the conversion of QA-triF to QA-triFR via the elongation of the C-28 sugar chain with a deoxyhexose on the D-fucose moiety (PubMed:39043959).</text>
</comment>
<comment type="pathway">
    <text evidence="3">Secondary metabolite biosynthesis; terpenoid biosynthesis.</text>
</comment>
<comment type="tissue specificity">
    <text evidence="3">Mainly expressed in flowers, flower buds and young leaves, and, to a lesser extent, in old leaves, stems and roots.</text>
</comment>
<comment type="biotechnology">
    <text evidence="4">Soapwort saponins possess anticancer properties and are also being explored as enhancers for endosomal escape in targeted tumor therapies (PubMed:39043959). They may also serve as precursors for vaccine adjuvants (PubMed:39043959).</text>
</comment>
<comment type="similarity">
    <text evidence="5">Belongs to the UDP-glycosyltransferase family.</text>
</comment>